<evidence type="ECO:0000255" key="1">
    <source>
        <dbReference type="HAMAP-Rule" id="MF_00022"/>
    </source>
</evidence>
<dbReference type="EC" id="6.1.1.17" evidence="1"/>
<dbReference type="EMBL" id="CP000683">
    <property type="protein sequence ID" value="ABV84683.1"/>
    <property type="molecule type" value="Genomic_DNA"/>
</dbReference>
<dbReference type="RefSeq" id="WP_012152658.1">
    <property type="nucleotide sequence ID" value="NC_009900.1"/>
</dbReference>
<dbReference type="SMR" id="A8F197"/>
<dbReference type="KEGG" id="rms:RMA_0462"/>
<dbReference type="HOGENOM" id="CLU_015768_6_1_5"/>
<dbReference type="Proteomes" id="UP000001311">
    <property type="component" value="Chromosome"/>
</dbReference>
<dbReference type="GO" id="GO:0005737">
    <property type="term" value="C:cytoplasm"/>
    <property type="evidence" value="ECO:0007669"/>
    <property type="project" value="UniProtKB-SubCell"/>
</dbReference>
<dbReference type="GO" id="GO:0005524">
    <property type="term" value="F:ATP binding"/>
    <property type="evidence" value="ECO:0007669"/>
    <property type="project" value="UniProtKB-UniRule"/>
</dbReference>
<dbReference type="GO" id="GO:0004818">
    <property type="term" value="F:glutamate-tRNA ligase activity"/>
    <property type="evidence" value="ECO:0007669"/>
    <property type="project" value="UniProtKB-UniRule"/>
</dbReference>
<dbReference type="GO" id="GO:0000049">
    <property type="term" value="F:tRNA binding"/>
    <property type="evidence" value="ECO:0007669"/>
    <property type="project" value="InterPro"/>
</dbReference>
<dbReference type="GO" id="GO:0008270">
    <property type="term" value="F:zinc ion binding"/>
    <property type="evidence" value="ECO:0007669"/>
    <property type="project" value="InterPro"/>
</dbReference>
<dbReference type="GO" id="GO:0006424">
    <property type="term" value="P:glutamyl-tRNA aminoacylation"/>
    <property type="evidence" value="ECO:0007669"/>
    <property type="project" value="UniProtKB-UniRule"/>
</dbReference>
<dbReference type="CDD" id="cd00808">
    <property type="entry name" value="GluRS_core"/>
    <property type="match status" value="1"/>
</dbReference>
<dbReference type="Gene3D" id="1.10.10.350">
    <property type="match status" value="1"/>
</dbReference>
<dbReference type="Gene3D" id="3.40.50.620">
    <property type="entry name" value="HUPs"/>
    <property type="match status" value="1"/>
</dbReference>
<dbReference type="HAMAP" id="MF_00022">
    <property type="entry name" value="Glu_tRNA_synth_type1"/>
    <property type="match status" value="1"/>
</dbReference>
<dbReference type="InterPro" id="IPR045462">
    <property type="entry name" value="aa-tRNA-synth_I_cd-bd"/>
</dbReference>
<dbReference type="InterPro" id="IPR020751">
    <property type="entry name" value="aa-tRNA-synth_I_codon-bd_sub2"/>
</dbReference>
<dbReference type="InterPro" id="IPR001412">
    <property type="entry name" value="aa-tRNA-synth_I_CS"/>
</dbReference>
<dbReference type="InterPro" id="IPR008925">
    <property type="entry name" value="aa_tRNA-synth_I_cd-bd_sf"/>
</dbReference>
<dbReference type="InterPro" id="IPR004527">
    <property type="entry name" value="Glu-tRNA-ligase_bac/mito"/>
</dbReference>
<dbReference type="InterPro" id="IPR000924">
    <property type="entry name" value="Glu/Gln-tRNA-synth"/>
</dbReference>
<dbReference type="InterPro" id="IPR020058">
    <property type="entry name" value="Glu/Gln-tRNA-synth_Ib_cat-dom"/>
</dbReference>
<dbReference type="InterPro" id="IPR049940">
    <property type="entry name" value="GluQ/Sye"/>
</dbReference>
<dbReference type="InterPro" id="IPR033910">
    <property type="entry name" value="GluRS_core"/>
</dbReference>
<dbReference type="InterPro" id="IPR014729">
    <property type="entry name" value="Rossmann-like_a/b/a_fold"/>
</dbReference>
<dbReference type="NCBIfam" id="TIGR00464">
    <property type="entry name" value="gltX_bact"/>
    <property type="match status" value="1"/>
</dbReference>
<dbReference type="PANTHER" id="PTHR43311">
    <property type="entry name" value="GLUTAMATE--TRNA LIGASE"/>
    <property type="match status" value="1"/>
</dbReference>
<dbReference type="PANTHER" id="PTHR43311:SF2">
    <property type="entry name" value="GLUTAMATE--TRNA LIGASE, MITOCHONDRIAL-RELATED"/>
    <property type="match status" value="1"/>
</dbReference>
<dbReference type="Pfam" id="PF19269">
    <property type="entry name" value="Anticodon_2"/>
    <property type="match status" value="1"/>
</dbReference>
<dbReference type="Pfam" id="PF00749">
    <property type="entry name" value="tRNA-synt_1c"/>
    <property type="match status" value="1"/>
</dbReference>
<dbReference type="PRINTS" id="PR00987">
    <property type="entry name" value="TRNASYNTHGLU"/>
</dbReference>
<dbReference type="SUPFAM" id="SSF48163">
    <property type="entry name" value="An anticodon-binding domain of class I aminoacyl-tRNA synthetases"/>
    <property type="match status" value="1"/>
</dbReference>
<dbReference type="SUPFAM" id="SSF52374">
    <property type="entry name" value="Nucleotidylyl transferase"/>
    <property type="match status" value="1"/>
</dbReference>
<dbReference type="PROSITE" id="PS00178">
    <property type="entry name" value="AA_TRNA_LIGASE_I"/>
    <property type="match status" value="1"/>
</dbReference>
<gene>
    <name evidence="1" type="primary">gltX1</name>
    <name type="ordered locus">RMA_0462</name>
</gene>
<accession>A8F197</accession>
<name>SYE1_RICM5</name>
<sequence length="447" mass="51768">MTKVITRFAPSPTGMLHVGNIRAALLNWLYAKKHNGQFILRFDDTDLERSKQEYKDAIEEDLKFLNINWDQTFNQLSRLSRYDEIKNLLLDKKRLYACYETPEELELKRKFQLSKGLPPIYDRASLNLTEEQAKKYIEQGRKPHYRFLVNHELINWHDMIKGEVKYDGKALSDPIVIRADGSMTYMLCSVIDDIDYDITHIIRGEDHVSNTAIQIQMFEALNTTPPTFGHLSLIINKDEKISKRVGGFEIATLRKEVGIEAMAIASFFSLLGSSAQILPYKSMEKLANQFEISSFSKSPTIYQPEDLERLNHKLLISLDFDTVKERLKEINAEYIDENFWLSVSPNLQKLRDVKDWWEICHQTPNVENLNLDKEYLKQAAELLPKGEITKDSWSIWTKEITNITGRKGKELFLPLRLALTARESGPEITGVLPLIDREEIIKRLTSA</sequence>
<protein>
    <recommendedName>
        <fullName evidence="1">Glutamate--tRNA ligase 1</fullName>
        <ecNumber evidence="1">6.1.1.17</ecNumber>
    </recommendedName>
    <alternativeName>
        <fullName evidence="1">Glutamyl-tRNA synthetase 1</fullName>
        <shortName evidence="1">GluRS 1</shortName>
    </alternativeName>
</protein>
<reference key="1">
    <citation type="journal article" date="2007" name="Genome Res.">
        <title>Lateral gene transfer between obligate intracellular bacteria: evidence from the Rickettsia massiliae genome.</title>
        <authorList>
            <person name="Blanc G."/>
            <person name="Ogata H."/>
            <person name="Robert C."/>
            <person name="Audic S."/>
            <person name="Claverie J.-M."/>
            <person name="Raoult D."/>
        </authorList>
    </citation>
    <scope>NUCLEOTIDE SEQUENCE [LARGE SCALE GENOMIC DNA]</scope>
    <source>
        <strain>Mtu5</strain>
    </source>
</reference>
<proteinExistence type="inferred from homology"/>
<organism>
    <name type="scientific">Rickettsia massiliae (strain Mtu5)</name>
    <dbReference type="NCBI Taxonomy" id="416276"/>
    <lineage>
        <taxon>Bacteria</taxon>
        <taxon>Pseudomonadati</taxon>
        <taxon>Pseudomonadota</taxon>
        <taxon>Alphaproteobacteria</taxon>
        <taxon>Rickettsiales</taxon>
        <taxon>Rickettsiaceae</taxon>
        <taxon>Rickettsieae</taxon>
        <taxon>Rickettsia</taxon>
        <taxon>spotted fever group</taxon>
    </lineage>
</organism>
<comment type="function">
    <text evidence="1">Catalyzes the attachment of glutamate to tRNA(Glu) in a two-step reaction: glutamate is first activated by ATP to form Glu-AMP and then transferred to the acceptor end of tRNA(Glu).</text>
</comment>
<comment type="catalytic activity">
    <reaction evidence="1">
        <text>tRNA(Glu) + L-glutamate + ATP = L-glutamyl-tRNA(Glu) + AMP + diphosphate</text>
        <dbReference type="Rhea" id="RHEA:23540"/>
        <dbReference type="Rhea" id="RHEA-COMP:9663"/>
        <dbReference type="Rhea" id="RHEA-COMP:9680"/>
        <dbReference type="ChEBI" id="CHEBI:29985"/>
        <dbReference type="ChEBI" id="CHEBI:30616"/>
        <dbReference type="ChEBI" id="CHEBI:33019"/>
        <dbReference type="ChEBI" id="CHEBI:78442"/>
        <dbReference type="ChEBI" id="CHEBI:78520"/>
        <dbReference type="ChEBI" id="CHEBI:456215"/>
        <dbReference type="EC" id="6.1.1.17"/>
    </reaction>
</comment>
<comment type="subunit">
    <text evidence="1">Monomer.</text>
</comment>
<comment type="subcellular location">
    <subcellularLocation>
        <location evidence="1">Cytoplasm</location>
    </subcellularLocation>
</comment>
<comment type="similarity">
    <text evidence="1">Belongs to the class-I aminoacyl-tRNA synthetase family. Glutamate--tRNA ligase type 1 subfamily.</text>
</comment>
<keyword id="KW-0030">Aminoacyl-tRNA synthetase</keyword>
<keyword id="KW-0067">ATP-binding</keyword>
<keyword id="KW-0963">Cytoplasm</keyword>
<keyword id="KW-0436">Ligase</keyword>
<keyword id="KW-0547">Nucleotide-binding</keyword>
<keyword id="KW-0648">Protein biosynthesis</keyword>
<feature type="chain" id="PRO_0000367758" description="Glutamate--tRNA ligase 1">
    <location>
        <begin position="1"/>
        <end position="447"/>
    </location>
</feature>
<feature type="short sequence motif" description="'HIGH' region" evidence="1">
    <location>
        <begin position="10"/>
        <end position="20"/>
    </location>
</feature>
<feature type="short sequence motif" description="'KMSKS' region" evidence="1">
    <location>
        <begin position="240"/>
        <end position="244"/>
    </location>
</feature>
<feature type="binding site" evidence="1">
    <location>
        <position position="243"/>
    </location>
    <ligand>
        <name>ATP</name>
        <dbReference type="ChEBI" id="CHEBI:30616"/>
    </ligand>
</feature>